<gene>
    <name type="primary">Fam151a</name>
</gene>
<dbReference type="EMBL" id="AY168619">
    <property type="protein sequence ID" value="AAO38748.1"/>
    <property type="molecule type" value="mRNA"/>
</dbReference>
<dbReference type="EMBL" id="AL929585">
    <property type="status" value="NOT_ANNOTATED_CDS"/>
    <property type="molecule type" value="Genomic_DNA"/>
</dbReference>
<dbReference type="EMBL" id="BC024426">
    <property type="protein sequence ID" value="AAH24426.1"/>
    <property type="molecule type" value="mRNA"/>
</dbReference>
<dbReference type="EMBL" id="BC024430">
    <property type="protein sequence ID" value="AAH24430.1"/>
    <property type="molecule type" value="mRNA"/>
</dbReference>
<dbReference type="EMBL" id="BC026682">
    <property type="protein sequence ID" value="AAH26682.1"/>
    <property type="molecule type" value="mRNA"/>
</dbReference>
<dbReference type="CCDS" id="CCDS18425.1"/>
<dbReference type="RefSeq" id="NP_666261.1">
    <property type="nucleotide sequence ID" value="NM_146149.1"/>
</dbReference>
<dbReference type="FunCoup" id="Q8QZW3">
    <property type="interactions" value="468"/>
</dbReference>
<dbReference type="STRING" id="10090.ENSMUSP00000047860"/>
<dbReference type="PhosphoSitePlus" id="Q8QZW3"/>
<dbReference type="SwissPalm" id="Q8QZW3"/>
<dbReference type="jPOST" id="Q8QZW3"/>
<dbReference type="PaxDb" id="10090-ENSMUSP00000047860"/>
<dbReference type="ProteomicsDB" id="275970"/>
<dbReference type="Antibodypedia" id="52799">
    <property type="antibodies" value="69 antibodies from 13 providers"/>
</dbReference>
<dbReference type="Ensembl" id="ENSMUST00000047620.3">
    <property type="protein sequence ID" value="ENSMUSP00000047860.3"/>
    <property type="gene ID" value="ENSMUSG00000034871.3"/>
</dbReference>
<dbReference type="GeneID" id="230579"/>
<dbReference type="KEGG" id="mmu:230579"/>
<dbReference type="UCSC" id="uc008tyu.1">
    <property type="organism name" value="mouse"/>
</dbReference>
<dbReference type="AGR" id="MGI:2657115"/>
<dbReference type="CTD" id="338094"/>
<dbReference type="MGI" id="MGI:2657115">
    <property type="gene designation" value="Fam151a"/>
</dbReference>
<dbReference type="VEuPathDB" id="HostDB:ENSMUSG00000034871"/>
<dbReference type="eggNOG" id="KOG3748">
    <property type="taxonomic scope" value="Eukaryota"/>
</dbReference>
<dbReference type="GeneTree" id="ENSGT00530000063681"/>
<dbReference type="HOGENOM" id="CLU_033162_2_0_1"/>
<dbReference type="InParanoid" id="Q8QZW3"/>
<dbReference type="OMA" id="AHQVYYD"/>
<dbReference type="OrthoDB" id="413402at2759"/>
<dbReference type="PhylomeDB" id="Q8QZW3"/>
<dbReference type="TreeFam" id="TF315079"/>
<dbReference type="BioGRID-ORCS" id="230579">
    <property type="hits" value="7 hits in 77 CRISPR screens"/>
</dbReference>
<dbReference type="ChiTaRS" id="Fam151a">
    <property type="organism name" value="mouse"/>
</dbReference>
<dbReference type="PRO" id="PR:Q8QZW3"/>
<dbReference type="Proteomes" id="UP000000589">
    <property type="component" value="Chromosome 4"/>
</dbReference>
<dbReference type="RNAct" id="Q8QZW3">
    <property type="molecule type" value="protein"/>
</dbReference>
<dbReference type="Bgee" id="ENSMUSG00000034871">
    <property type="expression patterns" value="Expressed in right kidney and 59 other cell types or tissues"/>
</dbReference>
<dbReference type="GO" id="GO:0016020">
    <property type="term" value="C:membrane"/>
    <property type="evidence" value="ECO:0007669"/>
    <property type="project" value="UniProtKB-SubCell"/>
</dbReference>
<dbReference type="InterPro" id="IPR019356">
    <property type="entry name" value="Memorin"/>
</dbReference>
<dbReference type="PANTHER" id="PTHR21184">
    <property type="entry name" value="MENORIN (DENDRITIC BRANCHING PROTEIN)"/>
    <property type="match status" value="1"/>
</dbReference>
<dbReference type="PANTHER" id="PTHR21184:SF4">
    <property type="entry name" value="PROTEIN FAM151A"/>
    <property type="match status" value="1"/>
</dbReference>
<dbReference type="Pfam" id="PF10223">
    <property type="entry name" value="Menorin"/>
    <property type="match status" value="2"/>
</dbReference>
<proteinExistence type="evidence at protein level"/>
<accession>Q8QZW3</accession>
<comment type="subcellular location">
    <subcellularLocation>
        <location evidence="3">Membrane</location>
        <topology evidence="3">Single-pass membrane protein</topology>
    </subcellularLocation>
</comment>
<comment type="similarity">
    <text evidence="3">Belongs to the menorin family.</text>
</comment>
<keyword id="KW-0472">Membrane</keyword>
<keyword id="KW-1185">Reference proteome</keyword>
<keyword id="KW-0812">Transmembrane</keyword>
<keyword id="KW-1133">Transmembrane helix</keyword>
<name>F151A_MOUSE</name>
<feature type="chain" id="PRO_0000310956" description="Protein FAM151A">
    <location>
        <begin position="1"/>
        <end position="608"/>
    </location>
</feature>
<feature type="transmembrane region" description="Helical" evidence="1">
    <location>
        <begin position="14"/>
        <end position="34"/>
    </location>
</feature>
<feature type="region of interest" description="Disordered" evidence="2">
    <location>
        <begin position="586"/>
        <end position="608"/>
    </location>
</feature>
<feature type="compositionally biased region" description="Polar residues" evidence="2">
    <location>
        <begin position="586"/>
        <end position="596"/>
    </location>
</feature>
<sequence length="608" mass="66681">MSCKKWCSSSQAKWILAGSVTVTLVLAISLILGLTLHQGTQPGCENDAICGPDADMLDYLMGMGQISHRDGLLVTWYHAANSKKEMAAALNSDVMVLEADVTVEGFNTANETKVPIMAHPPAIYSDNTLQEWLEAVLASSQKGIKLDFKSLKAVGPSLDLLRQLTEAGRIRRPVWINADILRGPNVPISIEINATQFLTLVQEKYPKATISPGFTTLYVPQLPNSTYTQAMVETMQELVGALPQKVTFPVRAVMTRAAWPHFSWLLSQSERYSLTLWQGASDPVSVEDLLFIRDNSAAHQIYYDLFEPVLSQFKQLALNTTRKRTYYTGGSLIPLLQQPKGDGLEVEWLVLEVNGSGRRAAITVPDREGMILLDIGLQEPEAGNPVPILHTPGGPALTLESCLLRLAVHPRRWGIHVNIVEPEALRPSLATLAHLSTLGHLPWPVWVGSTVSHGSFVVPGHIAGRELLTAVAEVFPHVTVAPGWPEEMLDSGYQEQMVTDMLELCQGLRQPVSFQLQAGPLSQSPANTVARLLASSPRATVTVYHSTAGNSHVDLWAGLWAARAVDRTRVYYRISQEYWKDLQADVSSNRPSSRIGPSSVEGFPGESR</sequence>
<reference key="1">
    <citation type="submission" date="2002-10" db="EMBL/GenBank/DDBJ databases">
        <authorList>
            <person name="Wang J."/>
            <person name="Cao Y."/>
            <person name="Gardner P."/>
            <person name="Steiner D.F."/>
        </authorList>
    </citation>
    <scope>NUCLEOTIDE SEQUENCE [MRNA]</scope>
    <source>
        <strain>C57BL/6J</strain>
        <tissue>Pancreas</tissue>
    </source>
</reference>
<reference key="2">
    <citation type="journal article" date="2009" name="PLoS Biol.">
        <title>Lineage-specific biology revealed by a finished genome assembly of the mouse.</title>
        <authorList>
            <person name="Church D.M."/>
            <person name="Goodstadt L."/>
            <person name="Hillier L.W."/>
            <person name="Zody M.C."/>
            <person name="Goldstein S."/>
            <person name="She X."/>
            <person name="Bult C.J."/>
            <person name="Agarwala R."/>
            <person name="Cherry J.L."/>
            <person name="DiCuccio M."/>
            <person name="Hlavina W."/>
            <person name="Kapustin Y."/>
            <person name="Meric P."/>
            <person name="Maglott D."/>
            <person name="Birtle Z."/>
            <person name="Marques A.C."/>
            <person name="Graves T."/>
            <person name="Zhou S."/>
            <person name="Teague B."/>
            <person name="Potamousis K."/>
            <person name="Churas C."/>
            <person name="Place M."/>
            <person name="Herschleb J."/>
            <person name="Runnheim R."/>
            <person name="Forrest D."/>
            <person name="Amos-Landgraf J."/>
            <person name="Schwartz D.C."/>
            <person name="Cheng Z."/>
            <person name="Lindblad-Toh K."/>
            <person name="Eichler E.E."/>
            <person name="Ponting C.P."/>
        </authorList>
    </citation>
    <scope>NUCLEOTIDE SEQUENCE [LARGE SCALE GENOMIC DNA]</scope>
    <source>
        <strain>C57BL/6J</strain>
    </source>
</reference>
<reference key="3">
    <citation type="journal article" date="2004" name="Genome Res.">
        <title>The status, quality, and expansion of the NIH full-length cDNA project: the Mammalian Gene Collection (MGC).</title>
        <authorList>
            <consortium name="The MGC Project Team"/>
        </authorList>
    </citation>
    <scope>NUCLEOTIDE SEQUENCE [LARGE SCALE MRNA]</scope>
    <source>
        <strain>FVB/N</strain>
        <tissue>Kidney</tissue>
    </source>
</reference>
<reference key="4">
    <citation type="journal article" date="2010" name="Cell">
        <title>A tissue-specific atlas of mouse protein phosphorylation and expression.</title>
        <authorList>
            <person name="Huttlin E.L."/>
            <person name="Jedrychowski M.P."/>
            <person name="Elias J.E."/>
            <person name="Goswami T."/>
            <person name="Rad R."/>
            <person name="Beausoleil S.A."/>
            <person name="Villen J."/>
            <person name="Haas W."/>
            <person name="Sowa M.E."/>
            <person name="Gygi S.P."/>
        </authorList>
    </citation>
    <scope>IDENTIFICATION BY MASS SPECTROMETRY [LARGE SCALE ANALYSIS]</scope>
    <source>
        <tissue>Kidney</tissue>
    </source>
</reference>
<protein>
    <recommendedName>
        <fullName>Protein FAM151A</fullName>
    </recommendedName>
</protein>
<evidence type="ECO:0000255" key="1"/>
<evidence type="ECO:0000256" key="2">
    <source>
        <dbReference type="SAM" id="MobiDB-lite"/>
    </source>
</evidence>
<evidence type="ECO:0000305" key="3"/>
<organism>
    <name type="scientific">Mus musculus</name>
    <name type="common">Mouse</name>
    <dbReference type="NCBI Taxonomy" id="10090"/>
    <lineage>
        <taxon>Eukaryota</taxon>
        <taxon>Metazoa</taxon>
        <taxon>Chordata</taxon>
        <taxon>Craniata</taxon>
        <taxon>Vertebrata</taxon>
        <taxon>Euteleostomi</taxon>
        <taxon>Mammalia</taxon>
        <taxon>Eutheria</taxon>
        <taxon>Euarchontoglires</taxon>
        <taxon>Glires</taxon>
        <taxon>Rodentia</taxon>
        <taxon>Myomorpha</taxon>
        <taxon>Muroidea</taxon>
        <taxon>Muridae</taxon>
        <taxon>Murinae</taxon>
        <taxon>Mus</taxon>
        <taxon>Mus</taxon>
    </lineage>
</organism>